<reference key="1">
    <citation type="journal article" date="2001" name="J. Biol. Chem.">
        <title>Structural compensation for the deficit of rRNA with proteins in the mammalian mitochondrial ribosome. Systematic analysis of protein components of the large ribosomal subunit from mammalian mitochondria.</title>
        <authorList>
            <person name="Suzuki T."/>
            <person name="Terasaki M."/>
            <person name="Takemoto-Hori C."/>
            <person name="Hanada T."/>
            <person name="Ueda T."/>
            <person name="Wada A."/>
            <person name="Watanabe K."/>
        </authorList>
    </citation>
    <scope>NUCLEOTIDE SEQUENCE [MRNA]</scope>
</reference>
<reference key="2">
    <citation type="journal article" date="2004" name="Genome Res.">
        <title>The status, quality, and expansion of the NIH full-length cDNA project: the Mammalian Gene Collection (MGC).</title>
        <authorList>
            <consortium name="The MGC Project Team"/>
        </authorList>
    </citation>
    <scope>NUCLEOTIDE SEQUENCE [LARGE SCALE MRNA]</scope>
    <source>
        <tissue>Lymph</tissue>
    </source>
</reference>
<reference key="3">
    <citation type="submission" date="1999-05" db="EMBL/GenBank/DDBJ databases">
        <title>Human partial CDS from CD34+ stem cells.</title>
        <authorList>
            <person name="Ye M."/>
            <person name="Zhang Q.-H."/>
            <person name="Zhou J."/>
            <person name="Shen Y."/>
            <person name="Wu X.-Y."/>
            <person name="Guan Z.Q."/>
            <person name="Wang L."/>
            <person name="Fan H.-Y."/>
            <person name="Mao Y.-F."/>
            <person name="Dai M."/>
            <person name="Huang Q.-H."/>
            <person name="Chen S.-J."/>
            <person name="Chen Z."/>
        </authorList>
    </citation>
    <scope>NUCLEOTIDE SEQUENCE [LARGE SCALE MRNA] OF 7-188</scope>
    <source>
        <tissue>Umbilical cord blood</tissue>
    </source>
</reference>
<reference key="4">
    <citation type="journal article" date="2001" name="Genomics">
        <title>The human mitochondrial ribosomal protein genes: mapping of 54 genes to the chromosomes and implications for human disorders.</title>
        <authorList>
            <person name="Kenmochi N."/>
            <person name="Suzuki T."/>
            <person name="Uechi T."/>
            <person name="Magoori M."/>
            <person name="Kuniba M."/>
            <person name="Higa S."/>
            <person name="Watanabe K."/>
            <person name="Tanaka T."/>
        </authorList>
    </citation>
    <scope>NUCLEOTIDE SEQUENCE [GENOMIC DNA] OF 105-126</scope>
</reference>
<reference key="5">
    <citation type="journal article" date="2011" name="BMC Syst. Biol.">
        <title>Initial characterization of the human central proteome.</title>
        <authorList>
            <person name="Burkard T.R."/>
            <person name="Planyavsky M."/>
            <person name="Kaupe I."/>
            <person name="Breitwieser F.P."/>
            <person name="Buerckstuemmer T."/>
            <person name="Bennett K.L."/>
            <person name="Superti-Furga G."/>
            <person name="Colinge J."/>
        </authorList>
    </citation>
    <scope>IDENTIFICATION BY MASS SPECTROMETRY [LARGE SCALE ANALYSIS]</scope>
</reference>
<reference key="6">
    <citation type="journal article" date="2015" name="Proteomics">
        <title>N-terminome analysis of the human mitochondrial proteome.</title>
        <authorList>
            <person name="Vaca Jacome A.S."/>
            <person name="Rabilloud T."/>
            <person name="Schaeffer-Reiss C."/>
            <person name="Rompais M."/>
            <person name="Ayoub D."/>
            <person name="Lane L."/>
            <person name="Bairoch A."/>
            <person name="Van Dorsselaer A."/>
            <person name="Carapito C."/>
        </authorList>
    </citation>
    <scope>IDENTIFICATION BY MASS SPECTROMETRY [LARGE SCALE ANALYSIS]</scope>
</reference>
<reference key="7">
    <citation type="journal article" date="2018" name="Biochemistry">
        <title>Dissecting substrate specificities of the mitochondrial AFG3L2 protease.</title>
        <authorList>
            <person name="Ding B."/>
            <person name="Martin D.W."/>
            <person name="Rampello A.J."/>
            <person name="Glynn S.E."/>
        </authorList>
    </citation>
    <scope>PROTEOLYTIC CLEAVAGE</scope>
</reference>
<reference evidence="11" key="8">
    <citation type="journal article" date="2014" name="Science">
        <title>Structure of the large ribosomal subunit from human mitochondria.</title>
        <authorList>
            <person name="Brown A."/>
            <person name="Amunts A."/>
            <person name="Bai X.C."/>
            <person name="Sugimoto Y."/>
            <person name="Edwards P.C."/>
            <person name="Murshudov G."/>
            <person name="Scheres S.H."/>
            <person name="Ramakrishnan V."/>
        </authorList>
    </citation>
    <scope>STRUCTURE BY ELECTRON MICROSCOPY (3.40 ANGSTROMS)</scope>
    <scope>SUBCELLULAR LOCATION</scope>
    <scope>SUBUNIT</scope>
</reference>
<reference evidence="12" key="9">
    <citation type="journal article" date="2015" name="Science">
        <title>Ribosome. The structure of the human mitochondrial ribosome.</title>
        <authorList>
            <person name="Amunts A."/>
            <person name="Brown A."/>
            <person name="Toots J."/>
            <person name="Scheres S.H."/>
            <person name="Ramakrishnan V."/>
        </authorList>
    </citation>
    <scope>STRUCTURE BY ELECTRON MICROSCOPY (3.50 ANGSTROMS)</scope>
    <scope>SUBCELLULAR LOCATION</scope>
    <scope>SUBUNIT</scope>
</reference>
<reference evidence="13 14" key="10">
    <citation type="journal article" date="2017" name="Nat. Struct. Mol. Biol.">
        <title>Structures of the human mitochondrial ribosome in native states of assembly.</title>
        <authorList>
            <person name="Brown A."/>
            <person name="Rathore S."/>
            <person name="Kimanius D."/>
            <person name="Aibara S."/>
            <person name="Bai X.C."/>
            <person name="Rorbach J."/>
            <person name="Amunts A."/>
            <person name="Ramakrishnan V."/>
        </authorList>
    </citation>
    <scope>STRUCTURE BY ELECTRON MICROSCOPY (3.03 ANGSTROMS) IN COMPLEX WITH ZINC</scope>
    <scope>SUBCELLULAR LOCATION</scope>
    <scope>SUBUNIT</scope>
</reference>
<reference evidence="15 16" key="11">
    <citation type="journal article" date="2022" name="Nat. Commun.">
        <title>A late-stage assembly checkpoint of the human mitochondrial ribosome large subunit.</title>
        <authorList>
            <person name="Rebelo-Guiomar P."/>
            <person name="Pellegrino S."/>
            <person name="Dent K.C."/>
            <person name="Sas-Chen A."/>
            <person name="Miller-Fleming L."/>
            <person name="Garone C."/>
            <person name="Van Haute L."/>
            <person name="Rogan J.F."/>
            <person name="Dinan A."/>
            <person name="Firth A.E."/>
            <person name="Andrews B."/>
            <person name="Whitworth A.J."/>
            <person name="Schwartz S."/>
            <person name="Warren A.J."/>
            <person name="Minczuk M."/>
        </authorList>
    </citation>
    <scope>STRUCTURE BY ELECTRON MICROSCOPY (2.9 ANGSTROMS) IN COMPLEX WITH MTLSU</scope>
    <scope>SUBUNIT</scope>
</reference>
<comment type="function">
    <text evidence="4 5 6">Component of the mitochondrial large ribosomal subunit (mt-LSU) (PubMed:25278503, PubMed:25838379, PubMed:28892042). The mitochondrial ribosome (mitoribosome) is a large ribonucleoprotein complex responsible for the synthesis of proteins inside mitochondria (PubMed:25278503, PubMed:25838379, PubMed:28892042).</text>
</comment>
<comment type="subunit">
    <text evidence="4 5 6 8">Component of the mitochondrial large ribosomal subunit (mt-LSU) (PubMed:25278503, PubMed:25838379, PubMed:28892042, PubMed:35177605). Mature mammalian 55S mitochondrial ribosomes consist of a small (28S) and a large (39S) subunit. The 28S small subunit contains a 12S ribosomal RNA (12S mt-rRNA) and 30 different proteins. The 39S large subunit contains a 16S rRNA (16S mt-rRNA), a copy of mitochondrial valine transfer RNA (mt-tRNA(Val)), which plays an integral structural role, and 52 different proteins. bL32m has a zinc binding site.</text>
</comment>
<comment type="interaction">
    <interactant intactId="EBI-7825220">
        <id>Q9BYC8</id>
    </interactant>
    <interactant intactId="EBI-3957793">
        <id>Q9GZV8</id>
        <label>PRDM14</label>
    </interactant>
    <organismsDiffer>false</organismsDiffer>
    <experiments>3</experiments>
</comment>
<comment type="subcellular location">
    <subcellularLocation>
        <location evidence="4 5 6">Mitochondrion</location>
    </subcellularLocation>
</comment>
<comment type="PTM">
    <text evidence="1 7">MRPL32 precursor is processed by the m-AAA protease (composed of AFG3L2 and SPG7), which cleaves the N-terminal transit peptide (PubMed:29932645). Cleavage by the m-AAA protease takes place prior to assembly into the large subunit, an essential step for mitochondrial ribosome (mitoribosome) assembly (PubMed:29932645). Proper processing by the m-AAA protease is dependent on the zinc-binding region within the tightly folded C-terminal domain of MRPL32: zinc-dependent folding halts degradation initiated from the N-terminus and triggers the release of mature MRPL32 (By similarity).</text>
</comment>
<comment type="similarity">
    <text evidence="10">Belongs to the bacterial ribosomal protein bL32 family.</text>
</comment>
<evidence type="ECO:0000250" key="1">
    <source>
        <dbReference type="UniProtKB" id="P25348"/>
    </source>
</evidence>
<evidence type="ECO:0000255" key="2"/>
<evidence type="ECO:0000256" key="3">
    <source>
        <dbReference type="SAM" id="MobiDB-lite"/>
    </source>
</evidence>
<evidence type="ECO:0000269" key="4">
    <source>
    </source>
</evidence>
<evidence type="ECO:0000269" key="5">
    <source>
    </source>
</evidence>
<evidence type="ECO:0000269" key="6">
    <source>
    </source>
</evidence>
<evidence type="ECO:0000269" key="7">
    <source>
    </source>
</evidence>
<evidence type="ECO:0000269" key="8">
    <source>
    </source>
</evidence>
<evidence type="ECO:0000303" key="9">
    <source>
    </source>
</evidence>
<evidence type="ECO:0000305" key="10"/>
<evidence type="ECO:0007744" key="11">
    <source>
        <dbReference type="PDB" id="3J7Y"/>
    </source>
</evidence>
<evidence type="ECO:0007744" key="12">
    <source>
        <dbReference type="PDB" id="3J9M"/>
    </source>
</evidence>
<evidence type="ECO:0007744" key="13">
    <source>
        <dbReference type="PDB" id="5OOL"/>
    </source>
</evidence>
<evidence type="ECO:0007744" key="14">
    <source>
        <dbReference type="PDB" id="5OOM"/>
    </source>
</evidence>
<evidence type="ECO:0007744" key="15">
    <source>
        <dbReference type="PDB" id="7QH6"/>
    </source>
</evidence>
<evidence type="ECO:0007744" key="16">
    <source>
        <dbReference type="PDB" id="7QH7"/>
    </source>
</evidence>
<evidence type="ECO:0007829" key="17">
    <source>
        <dbReference type="PDB" id="7OF0"/>
    </source>
</evidence>
<organism>
    <name type="scientific">Homo sapiens</name>
    <name type="common">Human</name>
    <dbReference type="NCBI Taxonomy" id="9606"/>
    <lineage>
        <taxon>Eukaryota</taxon>
        <taxon>Metazoa</taxon>
        <taxon>Chordata</taxon>
        <taxon>Craniata</taxon>
        <taxon>Vertebrata</taxon>
        <taxon>Euteleostomi</taxon>
        <taxon>Mammalia</taxon>
        <taxon>Eutheria</taxon>
        <taxon>Euarchontoglires</taxon>
        <taxon>Primates</taxon>
        <taxon>Haplorrhini</taxon>
        <taxon>Catarrhini</taxon>
        <taxon>Hominidae</taxon>
        <taxon>Homo</taxon>
    </lineage>
</organism>
<proteinExistence type="evidence at protein level"/>
<name>RM32_HUMAN</name>
<keyword id="KW-0002">3D-structure</keyword>
<keyword id="KW-0496">Mitochondrion</keyword>
<keyword id="KW-1267">Proteomics identification</keyword>
<keyword id="KW-1185">Reference proteome</keyword>
<keyword id="KW-0687">Ribonucleoprotein</keyword>
<keyword id="KW-0689">Ribosomal protein</keyword>
<keyword id="KW-0809">Transit peptide</keyword>
<feature type="transit peptide" description="Mitochondrion" evidence="2">
    <location>
        <begin position="1"/>
        <end status="unknown"/>
    </location>
</feature>
<feature type="chain" id="PRO_0000030513" description="Large ribosomal subunit protein bL32m">
    <location>
        <begin status="unknown"/>
        <end position="188"/>
    </location>
</feature>
<feature type="region of interest" description="Disordered" evidence="3">
    <location>
        <begin position="164"/>
        <end position="188"/>
    </location>
</feature>
<feature type="compositionally biased region" description="Basic and acidic residues" evidence="3">
    <location>
        <begin position="169"/>
        <end position="181"/>
    </location>
</feature>
<feature type="binding site" evidence="6 16">
    <location>
        <position position="110"/>
    </location>
    <ligand>
        <name>Zn(2+)</name>
        <dbReference type="ChEBI" id="CHEBI:29105"/>
    </ligand>
</feature>
<feature type="binding site" evidence="6">
    <location>
        <position position="113"/>
    </location>
    <ligand>
        <name>Zn(2+)</name>
        <dbReference type="ChEBI" id="CHEBI:29105"/>
    </ligand>
</feature>
<feature type="binding site" evidence="6 16">
    <location>
        <position position="123"/>
    </location>
    <ligand>
        <name>Zn(2+)</name>
        <dbReference type="ChEBI" id="CHEBI:29105"/>
    </ligand>
</feature>
<feature type="binding site" evidence="6 16">
    <location>
        <position position="126"/>
    </location>
    <ligand>
        <name>Zn(2+)</name>
        <dbReference type="ChEBI" id="CHEBI:29105"/>
    </ligand>
</feature>
<feature type="sequence conflict" description="In Ref. 3." evidence="10" ref="3">
    <original>SPWSAARGVLRNYWERLLRKLPQSRPGFPSPPW</original>
    <variation>RRGLRPGECFETTGSDCYGSFRRAGRAFPVLRGV</variation>
    <location>
        <begin position="11"/>
        <end position="43"/>
    </location>
</feature>
<feature type="helix" evidence="17">
    <location>
        <begin position="87"/>
        <end position="94"/>
    </location>
</feature>
<feature type="turn" evidence="17">
    <location>
        <begin position="97"/>
        <end position="99"/>
    </location>
</feature>
<feature type="strand" evidence="17">
    <location>
        <begin position="107"/>
        <end position="109"/>
    </location>
</feature>
<feature type="turn" evidence="17">
    <location>
        <begin position="111"/>
        <end position="113"/>
    </location>
</feature>
<feature type="strand" evidence="17">
    <location>
        <begin position="116"/>
        <end position="118"/>
    </location>
</feature>
<feature type="helix" evidence="17">
    <location>
        <begin position="124"/>
        <end position="145"/>
    </location>
</feature>
<feature type="strand" evidence="17">
    <location>
        <begin position="147"/>
        <end position="149"/>
    </location>
</feature>
<feature type="strand" evidence="17">
    <location>
        <begin position="156"/>
        <end position="159"/>
    </location>
</feature>
<feature type="turn" evidence="17">
    <location>
        <begin position="168"/>
        <end position="171"/>
    </location>
</feature>
<feature type="strand" evidence="17">
    <location>
        <begin position="172"/>
        <end position="176"/>
    </location>
</feature>
<gene>
    <name type="primary">MRPL32</name>
    <name type="ORF">HSPC283</name>
</gene>
<dbReference type="EMBL" id="AB049649">
    <property type="protein sequence ID" value="BAB40854.1"/>
    <property type="molecule type" value="mRNA"/>
</dbReference>
<dbReference type="EMBL" id="BC013147">
    <property type="protein sequence ID" value="AAH13147.1"/>
    <property type="molecule type" value="mRNA"/>
</dbReference>
<dbReference type="EMBL" id="AF161401">
    <property type="protein sequence ID" value="AAF28961.1"/>
    <property type="molecule type" value="mRNA"/>
</dbReference>
<dbReference type="EMBL" id="AB051343">
    <property type="protein sequence ID" value="BAB54933.1"/>
    <property type="molecule type" value="Genomic_DNA"/>
</dbReference>
<dbReference type="CCDS" id="CCDS5468.1"/>
<dbReference type="RefSeq" id="NP_114109.1">
    <property type="nucleotide sequence ID" value="NM_031903.3"/>
</dbReference>
<dbReference type="PDB" id="3J7Y">
    <property type="method" value="EM"/>
    <property type="resolution" value="3.40 A"/>
    <property type="chains" value="0=1-188"/>
</dbReference>
<dbReference type="PDB" id="3J9M">
    <property type="method" value="EM"/>
    <property type="resolution" value="3.50 A"/>
    <property type="chains" value="0=1-188"/>
</dbReference>
<dbReference type="PDB" id="5OOL">
    <property type="method" value="EM"/>
    <property type="resolution" value="3.06 A"/>
    <property type="chains" value="0=1-188"/>
</dbReference>
<dbReference type="PDB" id="5OOM">
    <property type="method" value="EM"/>
    <property type="resolution" value="3.03 A"/>
    <property type="chains" value="0=1-188"/>
</dbReference>
<dbReference type="PDB" id="6I9R">
    <property type="method" value="EM"/>
    <property type="resolution" value="3.90 A"/>
    <property type="chains" value="0=1-188"/>
</dbReference>
<dbReference type="PDB" id="6NU2">
    <property type="method" value="EM"/>
    <property type="resolution" value="3.90 A"/>
    <property type="chains" value="0=79-186"/>
</dbReference>
<dbReference type="PDB" id="6NU3">
    <property type="method" value="EM"/>
    <property type="resolution" value="4.40 A"/>
    <property type="chains" value="0=1-188"/>
</dbReference>
<dbReference type="PDB" id="6VLZ">
    <property type="method" value="EM"/>
    <property type="resolution" value="2.97 A"/>
    <property type="chains" value="0=1-188"/>
</dbReference>
<dbReference type="PDB" id="6VMI">
    <property type="method" value="EM"/>
    <property type="resolution" value="2.96 A"/>
    <property type="chains" value="0=1-188"/>
</dbReference>
<dbReference type="PDB" id="6ZM5">
    <property type="method" value="EM"/>
    <property type="resolution" value="2.89 A"/>
    <property type="chains" value="0=1-188"/>
</dbReference>
<dbReference type="PDB" id="6ZM6">
    <property type="method" value="EM"/>
    <property type="resolution" value="2.59 A"/>
    <property type="chains" value="0=1-188"/>
</dbReference>
<dbReference type="PDB" id="6ZS9">
    <property type="method" value="EM"/>
    <property type="resolution" value="4.00 A"/>
    <property type="chains" value="0=1-188"/>
</dbReference>
<dbReference type="PDB" id="6ZSA">
    <property type="method" value="EM"/>
    <property type="resolution" value="4.00 A"/>
    <property type="chains" value="0=1-188"/>
</dbReference>
<dbReference type="PDB" id="6ZSB">
    <property type="method" value="EM"/>
    <property type="resolution" value="4.50 A"/>
    <property type="chains" value="0=1-188"/>
</dbReference>
<dbReference type="PDB" id="6ZSC">
    <property type="method" value="EM"/>
    <property type="resolution" value="3.50 A"/>
    <property type="chains" value="0=1-188"/>
</dbReference>
<dbReference type="PDB" id="6ZSD">
    <property type="method" value="EM"/>
    <property type="resolution" value="3.70 A"/>
    <property type="chains" value="0=1-188"/>
</dbReference>
<dbReference type="PDB" id="6ZSE">
    <property type="method" value="EM"/>
    <property type="resolution" value="5.00 A"/>
    <property type="chains" value="0=1-188"/>
</dbReference>
<dbReference type="PDB" id="6ZSG">
    <property type="method" value="EM"/>
    <property type="resolution" value="4.00 A"/>
    <property type="chains" value="0=1-188"/>
</dbReference>
<dbReference type="PDB" id="7A5F">
    <property type="method" value="EM"/>
    <property type="resolution" value="4.40 A"/>
    <property type="chains" value="03=1-188"/>
</dbReference>
<dbReference type="PDB" id="7A5G">
    <property type="method" value="EM"/>
    <property type="resolution" value="4.33 A"/>
    <property type="chains" value="03=1-188"/>
</dbReference>
<dbReference type="PDB" id="7A5H">
    <property type="method" value="EM"/>
    <property type="resolution" value="3.30 A"/>
    <property type="chains" value="0=1-188"/>
</dbReference>
<dbReference type="PDB" id="7A5I">
    <property type="method" value="EM"/>
    <property type="resolution" value="3.70 A"/>
    <property type="chains" value="03=1-188"/>
</dbReference>
<dbReference type="PDB" id="7A5J">
    <property type="method" value="EM"/>
    <property type="resolution" value="3.10 A"/>
    <property type="chains" value="0=1-188"/>
</dbReference>
<dbReference type="PDB" id="7A5K">
    <property type="method" value="EM"/>
    <property type="resolution" value="3.70 A"/>
    <property type="chains" value="03=1-188"/>
</dbReference>
<dbReference type="PDB" id="7L08">
    <property type="method" value="EM"/>
    <property type="resolution" value="3.49 A"/>
    <property type="chains" value="0=1-188"/>
</dbReference>
<dbReference type="PDB" id="7L20">
    <property type="method" value="EM"/>
    <property type="resolution" value="3.15 A"/>
    <property type="chains" value="0=1-188"/>
</dbReference>
<dbReference type="PDB" id="7O9K">
    <property type="method" value="EM"/>
    <property type="resolution" value="3.10 A"/>
    <property type="chains" value="0=1-188"/>
</dbReference>
<dbReference type="PDB" id="7O9M">
    <property type="method" value="EM"/>
    <property type="resolution" value="2.50 A"/>
    <property type="chains" value="0=1-188"/>
</dbReference>
<dbReference type="PDB" id="7ODR">
    <property type="method" value="EM"/>
    <property type="resolution" value="2.90 A"/>
    <property type="chains" value="0=1-188"/>
</dbReference>
<dbReference type="PDB" id="7ODS">
    <property type="method" value="EM"/>
    <property type="resolution" value="3.10 A"/>
    <property type="chains" value="0=1-188"/>
</dbReference>
<dbReference type="PDB" id="7ODT">
    <property type="method" value="EM"/>
    <property type="resolution" value="3.10 A"/>
    <property type="chains" value="0=1-188"/>
</dbReference>
<dbReference type="PDB" id="7OF0">
    <property type="method" value="EM"/>
    <property type="resolution" value="2.20 A"/>
    <property type="chains" value="0=1-188"/>
</dbReference>
<dbReference type="PDB" id="7OF2">
    <property type="method" value="EM"/>
    <property type="resolution" value="2.70 A"/>
    <property type="chains" value="0=1-188"/>
</dbReference>
<dbReference type="PDB" id="7OF3">
    <property type="method" value="EM"/>
    <property type="resolution" value="2.70 A"/>
    <property type="chains" value="0=1-188"/>
</dbReference>
<dbReference type="PDB" id="7OF4">
    <property type="method" value="EM"/>
    <property type="resolution" value="2.70 A"/>
    <property type="chains" value="0=1-188"/>
</dbReference>
<dbReference type="PDB" id="7OF5">
    <property type="method" value="EM"/>
    <property type="resolution" value="2.90 A"/>
    <property type="chains" value="0=1-188"/>
</dbReference>
<dbReference type="PDB" id="7OF6">
    <property type="method" value="EM"/>
    <property type="resolution" value="2.60 A"/>
    <property type="chains" value="0=1-188"/>
</dbReference>
<dbReference type="PDB" id="7OF7">
    <property type="method" value="EM"/>
    <property type="resolution" value="2.50 A"/>
    <property type="chains" value="0=79-186"/>
</dbReference>
<dbReference type="PDB" id="7OG4">
    <property type="method" value="EM"/>
    <property type="resolution" value="3.80 A"/>
    <property type="chains" value="0=1-188"/>
</dbReference>
<dbReference type="PDB" id="7OI6">
    <property type="method" value="EM"/>
    <property type="resolution" value="5.70 A"/>
    <property type="chains" value="0=1-188"/>
</dbReference>
<dbReference type="PDB" id="7OI7">
    <property type="method" value="EM"/>
    <property type="resolution" value="3.50 A"/>
    <property type="chains" value="0=1-188"/>
</dbReference>
<dbReference type="PDB" id="7OI8">
    <property type="method" value="EM"/>
    <property type="resolution" value="3.50 A"/>
    <property type="chains" value="0=1-188"/>
</dbReference>
<dbReference type="PDB" id="7OI9">
    <property type="method" value="EM"/>
    <property type="resolution" value="3.30 A"/>
    <property type="chains" value="0=1-188"/>
</dbReference>
<dbReference type="PDB" id="7OIA">
    <property type="method" value="EM"/>
    <property type="resolution" value="3.20 A"/>
    <property type="chains" value="0=1-188"/>
</dbReference>
<dbReference type="PDB" id="7OIB">
    <property type="method" value="EM"/>
    <property type="resolution" value="3.30 A"/>
    <property type="chains" value="0=1-188"/>
</dbReference>
<dbReference type="PDB" id="7OIC">
    <property type="method" value="EM"/>
    <property type="resolution" value="3.10 A"/>
    <property type="chains" value="0=1-188"/>
</dbReference>
<dbReference type="PDB" id="7OID">
    <property type="method" value="EM"/>
    <property type="resolution" value="3.70 A"/>
    <property type="chains" value="0=1-188"/>
</dbReference>
<dbReference type="PDB" id="7OIE">
    <property type="method" value="EM"/>
    <property type="resolution" value="3.50 A"/>
    <property type="chains" value="0=1-188"/>
</dbReference>
<dbReference type="PDB" id="7PD3">
    <property type="method" value="EM"/>
    <property type="resolution" value="3.40 A"/>
    <property type="chains" value="0=1-188"/>
</dbReference>
<dbReference type="PDB" id="7PO4">
    <property type="method" value="EM"/>
    <property type="resolution" value="2.56 A"/>
    <property type="chains" value="0=1-188"/>
</dbReference>
<dbReference type="PDB" id="7QH6">
    <property type="method" value="EM"/>
    <property type="resolution" value="3.08 A"/>
    <property type="chains" value="0=1-188"/>
</dbReference>
<dbReference type="PDB" id="7QH7">
    <property type="method" value="EM"/>
    <property type="resolution" value="2.89 A"/>
    <property type="chains" value="0=79-186"/>
</dbReference>
<dbReference type="PDB" id="7QI4">
    <property type="method" value="EM"/>
    <property type="resolution" value="2.21 A"/>
    <property type="chains" value="0=1-188"/>
</dbReference>
<dbReference type="PDB" id="7QI5">
    <property type="method" value="EM"/>
    <property type="resolution" value="2.63 A"/>
    <property type="chains" value="0=1-188"/>
</dbReference>
<dbReference type="PDB" id="7QI6">
    <property type="method" value="EM"/>
    <property type="resolution" value="2.98 A"/>
    <property type="chains" value="0=1-188"/>
</dbReference>
<dbReference type="PDB" id="8ANY">
    <property type="method" value="EM"/>
    <property type="resolution" value="2.85 A"/>
    <property type="chains" value="0=1-188"/>
</dbReference>
<dbReference type="PDB" id="8K2A">
    <property type="method" value="EM"/>
    <property type="resolution" value="2.90 A"/>
    <property type="chains" value="Lf=1-188"/>
</dbReference>
<dbReference type="PDB" id="8K2B">
    <property type="method" value="EM"/>
    <property type="resolution" value="3.40 A"/>
    <property type="chains" value="Lf=1-188"/>
</dbReference>
<dbReference type="PDB" id="8OIR">
    <property type="method" value="EM"/>
    <property type="resolution" value="3.10 A"/>
    <property type="chains" value="BH=1-188"/>
</dbReference>
<dbReference type="PDB" id="8OIT">
    <property type="method" value="EM"/>
    <property type="resolution" value="2.90 A"/>
    <property type="chains" value="BH=1-188"/>
</dbReference>
<dbReference type="PDB" id="8PK0">
    <property type="method" value="EM"/>
    <property type="resolution" value="3.03 A"/>
    <property type="chains" value="0=1-188"/>
</dbReference>
<dbReference type="PDB" id="8QSJ">
    <property type="method" value="EM"/>
    <property type="resolution" value="3.00 A"/>
    <property type="chains" value="0=1-188"/>
</dbReference>
<dbReference type="PDB" id="8QU1">
    <property type="method" value="EM"/>
    <property type="resolution" value="2.74 A"/>
    <property type="chains" value="0=1-188"/>
</dbReference>
<dbReference type="PDB" id="8QU5">
    <property type="method" value="EM"/>
    <property type="resolution" value="2.42 A"/>
    <property type="chains" value="0=1-188"/>
</dbReference>
<dbReference type="PDB" id="8RRI">
    <property type="method" value="EM"/>
    <property type="resolution" value="2.40 A"/>
    <property type="chains" value="0=1-188"/>
</dbReference>
<dbReference type="PDB" id="8XT0">
    <property type="method" value="EM"/>
    <property type="resolution" value="3.20 A"/>
    <property type="chains" value="Lf=1-188"/>
</dbReference>
<dbReference type="PDB" id="8XT1">
    <property type="method" value="EM"/>
    <property type="resolution" value="3.10 A"/>
    <property type="chains" value="Lf=1-188"/>
</dbReference>
<dbReference type="PDB" id="8XT2">
    <property type="method" value="EM"/>
    <property type="resolution" value="3.30 A"/>
    <property type="chains" value="Lf=1-188"/>
</dbReference>
<dbReference type="PDB" id="8XT3">
    <property type="method" value="EM"/>
    <property type="resolution" value="3.10 A"/>
    <property type="chains" value="Lf=1-188"/>
</dbReference>
<dbReference type="PDBsum" id="3J7Y"/>
<dbReference type="PDBsum" id="3J9M"/>
<dbReference type="PDBsum" id="5OOL"/>
<dbReference type="PDBsum" id="5OOM"/>
<dbReference type="PDBsum" id="6I9R"/>
<dbReference type="PDBsum" id="6NU2"/>
<dbReference type="PDBsum" id="6NU3"/>
<dbReference type="PDBsum" id="6VLZ"/>
<dbReference type="PDBsum" id="6VMI"/>
<dbReference type="PDBsum" id="6ZM5"/>
<dbReference type="PDBsum" id="6ZM6"/>
<dbReference type="PDBsum" id="6ZS9"/>
<dbReference type="PDBsum" id="6ZSA"/>
<dbReference type="PDBsum" id="6ZSB"/>
<dbReference type="PDBsum" id="6ZSC"/>
<dbReference type="PDBsum" id="6ZSD"/>
<dbReference type="PDBsum" id="6ZSE"/>
<dbReference type="PDBsum" id="6ZSG"/>
<dbReference type="PDBsum" id="7A5F"/>
<dbReference type="PDBsum" id="7A5G"/>
<dbReference type="PDBsum" id="7A5H"/>
<dbReference type="PDBsum" id="7A5I"/>
<dbReference type="PDBsum" id="7A5J"/>
<dbReference type="PDBsum" id="7A5K"/>
<dbReference type="PDBsum" id="7L08"/>
<dbReference type="PDBsum" id="7L20"/>
<dbReference type="PDBsum" id="7O9K"/>
<dbReference type="PDBsum" id="7O9M"/>
<dbReference type="PDBsum" id="7ODR"/>
<dbReference type="PDBsum" id="7ODS"/>
<dbReference type="PDBsum" id="7ODT"/>
<dbReference type="PDBsum" id="7OF0"/>
<dbReference type="PDBsum" id="7OF2"/>
<dbReference type="PDBsum" id="7OF3"/>
<dbReference type="PDBsum" id="7OF4"/>
<dbReference type="PDBsum" id="7OF5"/>
<dbReference type="PDBsum" id="7OF6"/>
<dbReference type="PDBsum" id="7OF7"/>
<dbReference type="PDBsum" id="7OG4"/>
<dbReference type="PDBsum" id="7OI6"/>
<dbReference type="PDBsum" id="7OI7"/>
<dbReference type="PDBsum" id="7OI8"/>
<dbReference type="PDBsum" id="7OI9"/>
<dbReference type="PDBsum" id="7OIA"/>
<dbReference type="PDBsum" id="7OIB"/>
<dbReference type="PDBsum" id="7OIC"/>
<dbReference type="PDBsum" id="7OID"/>
<dbReference type="PDBsum" id="7OIE"/>
<dbReference type="PDBsum" id="7PD3"/>
<dbReference type="PDBsum" id="7PO4"/>
<dbReference type="PDBsum" id="7QH6"/>
<dbReference type="PDBsum" id="7QH7"/>
<dbReference type="PDBsum" id="7QI4"/>
<dbReference type="PDBsum" id="7QI5"/>
<dbReference type="PDBsum" id="7QI6"/>
<dbReference type="PDBsum" id="8ANY"/>
<dbReference type="PDBsum" id="8K2A"/>
<dbReference type="PDBsum" id="8K2B"/>
<dbReference type="PDBsum" id="8OIR"/>
<dbReference type="PDBsum" id="8OIT"/>
<dbReference type="PDBsum" id="8PK0"/>
<dbReference type="PDBsum" id="8QSJ"/>
<dbReference type="PDBsum" id="8QU1"/>
<dbReference type="PDBsum" id="8QU5"/>
<dbReference type="PDBsum" id="8RRI"/>
<dbReference type="PDBsum" id="8XT0"/>
<dbReference type="PDBsum" id="8XT1"/>
<dbReference type="PDBsum" id="8XT2"/>
<dbReference type="PDBsum" id="8XT3"/>
<dbReference type="EMDB" id="EMD-0514"/>
<dbReference type="EMDB" id="EMD-0515"/>
<dbReference type="EMDB" id="EMD-11278"/>
<dbReference type="EMDB" id="EMD-11279"/>
<dbReference type="EMDB" id="EMD-11390"/>
<dbReference type="EMDB" id="EMD-11391"/>
<dbReference type="EMDB" id="EMD-11392"/>
<dbReference type="EMDB" id="EMD-11393"/>
<dbReference type="EMDB" id="EMD-11394"/>
<dbReference type="EMDB" id="EMD-11395"/>
<dbReference type="EMDB" id="EMD-11397"/>
<dbReference type="EMDB" id="EMD-11641"/>
<dbReference type="EMDB" id="EMD-11642"/>
<dbReference type="EMDB" id="EMD-11643"/>
<dbReference type="EMDB" id="EMD-11644"/>
<dbReference type="EMDB" id="EMD-11645"/>
<dbReference type="EMDB" id="EMD-11646"/>
<dbReference type="EMDB" id="EMD-12763"/>
<dbReference type="EMDB" id="EMD-12764"/>
<dbReference type="EMDB" id="EMD-12845"/>
<dbReference type="EMDB" id="EMD-12846"/>
<dbReference type="EMDB" id="EMD-12847"/>
<dbReference type="EMDB" id="EMD-12865"/>
<dbReference type="EMDB" id="EMD-12867"/>
<dbReference type="EMDB" id="EMD-12868"/>
<dbReference type="EMDB" id="EMD-12869"/>
<dbReference type="EMDB" id="EMD-12870"/>
<dbReference type="EMDB" id="EMD-12871"/>
<dbReference type="EMDB" id="EMD-12872"/>
<dbReference type="EMDB" id="EMD-12877"/>
<dbReference type="EMDB" id="EMD-12919"/>
<dbReference type="EMDB" id="EMD-12920"/>
<dbReference type="EMDB" id="EMD-12921"/>
<dbReference type="EMDB" id="EMD-12922"/>
<dbReference type="EMDB" id="EMD-12923"/>
<dbReference type="EMDB" id="EMD-12924"/>
<dbReference type="EMDB" id="EMD-12925"/>
<dbReference type="EMDB" id="EMD-12926"/>
<dbReference type="EMDB" id="EMD-12927"/>
<dbReference type="EMDB" id="EMD-13329"/>
<dbReference type="EMDB" id="EMD-13562"/>
<dbReference type="EMDB" id="EMD-13965"/>
<dbReference type="EMDB" id="EMD-13967"/>
<dbReference type="EMDB" id="EMD-13980"/>
<dbReference type="EMDB" id="EMD-13981"/>
<dbReference type="EMDB" id="EMD-13982"/>
<dbReference type="EMDB" id="EMD-15544"/>
<dbReference type="EMDB" id="EMD-16897"/>
<dbReference type="EMDB" id="EMD-16899"/>
<dbReference type="EMDB" id="EMD-17719"/>
<dbReference type="EMDB" id="EMD-19460"/>
<dbReference type="EMDB" id="EMD-21233"/>
<dbReference type="EMDB" id="EMD-21242"/>
<dbReference type="EMDB" id="EMD-23096"/>
<dbReference type="EMDB" id="EMD-23121"/>
<dbReference type="EMDB" id="EMD-36836"/>
<dbReference type="EMDB" id="EMD-36837"/>
<dbReference type="EMDB" id="EMD-3842"/>
<dbReference type="EMDB" id="EMD-3843"/>
<dbReference type="EMDB" id="EMD-38632"/>
<dbReference type="EMDB" id="EMD-38633"/>
<dbReference type="EMDB" id="EMD-38634"/>
<dbReference type="EMDB" id="EMD-38635"/>
<dbReference type="EMDB" id="EMD-4434"/>
<dbReference type="SMR" id="Q9BYC8"/>
<dbReference type="BioGRID" id="122368">
    <property type="interactions" value="140"/>
</dbReference>
<dbReference type="ComplexPortal" id="CPX-5226">
    <property type="entry name" value="39S mitochondrial large ribosomal subunit"/>
</dbReference>
<dbReference type="CORUM" id="Q9BYC8"/>
<dbReference type="FunCoup" id="Q9BYC8">
    <property type="interactions" value="871"/>
</dbReference>
<dbReference type="IntAct" id="Q9BYC8">
    <property type="interactions" value="77"/>
</dbReference>
<dbReference type="MINT" id="Q9BYC8"/>
<dbReference type="STRING" id="9606.ENSP00000223324"/>
<dbReference type="iPTMnet" id="Q9BYC8"/>
<dbReference type="PhosphoSitePlus" id="Q9BYC8"/>
<dbReference type="BioMuta" id="MRPL32"/>
<dbReference type="DMDM" id="22001923"/>
<dbReference type="jPOST" id="Q9BYC8"/>
<dbReference type="MassIVE" id="Q9BYC8"/>
<dbReference type="PaxDb" id="9606-ENSP00000223324"/>
<dbReference type="PeptideAtlas" id="Q9BYC8"/>
<dbReference type="ProteomicsDB" id="79613"/>
<dbReference type="Pumba" id="Q9BYC8"/>
<dbReference type="Antibodypedia" id="57638">
    <property type="antibodies" value="85 antibodies from 19 providers"/>
</dbReference>
<dbReference type="DNASU" id="64983"/>
<dbReference type="Ensembl" id="ENST00000223324.3">
    <property type="protein sequence ID" value="ENSP00000223324.2"/>
    <property type="gene ID" value="ENSG00000106591.4"/>
</dbReference>
<dbReference type="GeneID" id="64983"/>
<dbReference type="KEGG" id="hsa:64983"/>
<dbReference type="MANE-Select" id="ENST00000223324.3">
    <property type="protein sequence ID" value="ENSP00000223324.2"/>
    <property type="RefSeq nucleotide sequence ID" value="NM_031903.3"/>
    <property type="RefSeq protein sequence ID" value="NP_114109.1"/>
</dbReference>
<dbReference type="UCSC" id="uc003tia.4">
    <property type="organism name" value="human"/>
</dbReference>
<dbReference type="AGR" id="HGNC:14035"/>
<dbReference type="CTD" id="64983"/>
<dbReference type="GeneCards" id="MRPL32"/>
<dbReference type="HGNC" id="HGNC:14035">
    <property type="gene designation" value="MRPL32"/>
</dbReference>
<dbReference type="HPA" id="ENSG00000106591">
    <property type="expression patterns" value="Low tissue specificity"/>
</dbReference>
<dbReference type="MIM" id="611839">
    <property type="type" value="gene"/>
</dbReference>
<dbReference type="neXtProt" id="NX_Q9BYC8"/>
<dbReference type="OpenTargets" id="ENSG00000106591"/>
<dbReference type="PharmGKB" id="PA30963"/>
<dbReference type="VEuPathDB" id="HostDB:ENSG00000106591"/>
<dbReference type="eggNOG" id="KOG4080">
    <property type="taxonomic scope" value="Eukaryota"/>
</dbReference>
<dbReference type="GeneTree" id="ENSGT00390000014996"/>
<dbReference type="HOGENOM" id="CLU_116455_1_0_1"/>
<dbReference type="InParanoid" id="Q9BYC8"/>
<dbReference type="OMA" id="VLCPHCY"/>
<dbReference type="OrthoDB" id="2014905at2759"/>
<dbReference type="PAN-GO" id="Q9BYC8">
    <property type="GO annotations" value="2 GO annotations based on evolutionary models"/>
</dbReference>
<dbReference type="PhylomeDB" id="Q9BYC8"/>
<dbReference type="TreeFam" id="TF106139"/>
<dbReference type="PathwayCommons" id="Q9BYC8"/>
<dbReference type="Reactome" id="R-HSA-5368286">
    <property type="pathway name" value="Mitochondrial translation initiation"/>
</dbReference>
<dbReference type="Reactome" id="R-HSA-5389840">
    <property type="pathway name" value="Mitochondrial translation elongation"/>
</dbReference>
<dbReference type="Reactome" id="R-HSA-5419276">
    <property type="pathway name" value="Mitochondrial translation termination"/>
</dbReference>
<dbReference type="Reactome" id="R-HSA-9837999">
    <property type="pathway name" value="Mitochondrial protein degradation"/>
</dbReference>
<dbReference type="SignaLink" id="Q9BYC8"/>
<dbReference type="SIGNOR" id="Q9BYC8"/>
<dbReference type="BioGRID-ORCS" id="64983">
    <property type="hits" value="320 hits in 1158 CRISPR screens"/>
</dbReference>
<dbReference type="ChiTaRS" id="MRPL32">
    <property type="organism name" value="human"/>
</dbReference>
<dbReference type="GeneWiki" id="MRPL32"/>
<dbReference type="GenomeRNAi" id="64983"/>
<dbReference type="Pharos" id="Q9BYC8">
    <property type="development level" value="Tdark"/>
</dbReference>
<dbReference type="PRO" id="PR:Q9BYC8"/>
<dbReference type="Proteomes" id="UP000005640">
    <property type="component" value="Chromosome 7"/>
</dbReference>
<dbReference type="RNAct" id="Q9BYC8">
    <property type="molecule type" value="protein"/>
</dbReference>
<dbReference type="Bgee" id="ENSG00000106591">
    <property type="expression patterns" value="Expressed in oocyte and 191 other cell types or tissues"/>
</dbReference>
<dbReference type="ExpressionAtlas" id="Q9BYC8">
    <property type="expression patterns" value="baseline and differential"/>
</dbReference>
<dbReference type="GO" id="GO:0005743">
    <property type="term" value="C:mitochondrial inner membrane"/>
    <property type="evidence" value="ECO:0000304"/>
    <property type="project" value="Reactome"/>
</dbReference>
<dbReference type="GO" id="GO:0005762">
    <property type="term" value="C:mitochondrial large ribosomal subunit"/>
    <property type="evidence" value="ECO:0000314"/>
    <property type="project" value="UniProtKB"/>
</dbReference>
<dbReference type="GO" id="GO:0005759">
    <property type="term" value="C:mitochondrial matrix"/>
    <property type="evidence" value="ECO:0000304"/>
    <property type="project" value="Reactome"/>
</dbReference>
<dbReference type="GO" id="GO:0005761">
    <property type="term" value="C:mitochondrial ribosome"/>
    <property type="evidence" value="ECO:0000303"/>
    <property type="project" value="UniProtKB"/>
</dbReference>
<dbReference type="GO" id="GO:0005739">
    <property type="term" value="C:mitochondrion"/>
    <property type="evidence" value="ECO:0000314"/>
    <property type="project" value="UniProtKB"/>
</dbReference>
<dbReference type="GO" id="GO:0003723">
    <property type="term" value="F:RNA binding"/>
    <property type="evidence" value="ECO:0007005"/>
    <property type="project" value="UniProtKB"/>
</dbReference>
<dbReference type="GO" id="GO:0003735">
    <property type="term" value="F:structural constituent of ribosome"/>
    <property type="evidence" value="ECO:0000318"/>
    <property type="project" value="GO_Central"/>
</dbReference>
<dbReference type="GO" id="GO:0032543">
    <property type="term" value="P:mitochondrial translation"/>
    <property type="evidence" value="ECO:0000303"/>
    <property type="project" value="ComplexPortal"/>
</dbReference>
<dbReference type="GO" id="GO:0006412">
    <property type="term" value="P:translation"/>
    <property type="evidence" value="ECO:0000303"/>
    <property type="project" value="UniProtKB"/>
</dbReference>
<dbReference type="InterPro" id="IPR051991">
    <property type="entry name" value="Mitoribosomal_protein_bL32"/>
</dbReference>
<dbReference type="InterPro" id="IPR002677">
    <property type="entry name" value="Ribosomal_bL32"/>
</dbReference>
<dbReference type="InterPro" id="IPR011332">
    <property type="entry name" value="Ribosomal_zn-bd"/>
</dbReference>
<dbReference type="PANTHER" id="PTHR21026">
    <property type="entry name" value="39S RIBOSOMAL PROTEIN L32, MITOCHONDRIAL"/>
    <property type="match status" value="1"/>
</dbReference>
<dbReference type="PANTHER" id="PTHR21026:SF2">
    <property type="entry name" value="LARGE RIBOSOMAL SUBUNIT PROTEIN BL32M"/>
    <property type="match status" value="1"/>
</dbReference>
<dbReference type="Pfam" id="PF01783">
    <property type="entry name" value="Ribosomal_L32p"/>
    <property type="match status" value="1"/>
</dbReference>
<dbReference type="SUPFAM" id="SSF57829">
    <property type="entry name" value="Zn-binding ribosomal proteins"/>
    <property type="match status" value="1"/>
</dbReference>
<protein>
    <recommendedName>
        <fullName evidence="9">Large ribosomal subunit protein bL32m</fullName>
    </recommendedName>
    <alternativeName>
        <fullName>39S ribosomal protein L32, mitochondrial</fullName>
        <shortName>L32mt</shortName>
        <shortName>MRP-L32</shortName>
    </alternativeName>
</protein>
<accession>Q9BYC8</accession>
<accession>Q96Q68</accession>
<accession>Q9P098</accession>
<sequence length="188" mass="21405">MALAMLVLVVSPWSAARGVLRNYWERLLRKLPQSRPGFPSPPWGPALAVQGPAMFTEPANDTSGSKENSSLLDSIFWMAAPKNRRTIEVNRCRRRNPQKLIKVKNNIDVCPECGHLKQKHVLCAYCYEKVCKETAEIRRQIGKQEGGPFKAPTIETVVLYTGETPSEQDQGKRIIERDRKRPSWFTQN</sequence>